<accession>Q6GG72</accession>
<reference key="1">
    <citation type="journal article" date="2004" name="Proc. Natl. Acad. Sci. U.S.A.">
        <title>Complete genomes of two clinical Staphylococcus aureus strains: evidence for the rapid evolution of virulence and drug resistance.</title>
        <authorList>
            <person name="Holden M.T.G."/>
            <person name="Feil E.J."/>
            <person name="Lindsay J.A."/>
            <person name="Peacock S.J."/>
            <person name="Day N.P.J."/>
            <person name="Enright M.C."/>
            <person name="Foster T.J."/>
            <person name="Moore C.E."/>
            <person name="Hurst L."/>
            <person name="Atkin R."/>
            <person name="Barron A."/>
            <person name="Bason N."/>
            <person name="Bentley S.D."/>
            <person name="Chillingworth C."/>
            <person name="Chillingworth T."/>
            <person name="Churcher C."/>
            <person name="Clark L."/>
            <person name="Corton C."/>
            <person name="Cronin A."/>
            <person name="Doggett J."/>
            <person name="Dowd L."/>
            <person name="Feltwell T."/>
            <person name="Hance Z."/>
            <person name="Harris B."/>
            <person name="Hauser H."/>
            <person name="Holroyd S."/>
            <person name="Jagels K."/>
            <person name="James K.D."/>
            <person name="Lennard N."/>
            <person name="Line A."/>
            <person name="Mayes R."/>
            <person name="Moule S."/>
            <person name="Mungall K."/>
            <person name="Ormond D."/>
            <person name="Quail M.A."/>
            <person name="Rabbinowitsch E."/>
            <person name="Rutherford K.M."/>
            <person name="Sanders M."/>
            <person name="Sharp S."/>
            <person name="Simmonds M."/>
            <person name="Stevens K."/>
            <person name="Whitehead S."/>
            <person name="Barrell B.G."/>
            <person name="Spratt B.G."/>
            <person name="Parkhill J."/>
        </authorList>
    </citation>
    <scope>NUCLEOTIDE SEQUENCE [LARGE SCALE GENOMIC DNA]</scope>
    <source>
        <strain>MRSA252</strain>
    </source>
</reference>
<dbReference type="EC" id="6.1.1.21" evidence="1"/>
<dbReference type="EMBL" id="BX571856">
    <property type="protein sequence ID" value="CAG40702.1"/>
    <property type="molecule type" value="Genomic_DNA"/>
</dbReference>
<dbReference type="RefSeq" id="WP_000590826.1">
    <property type="nucleotide sequence ID" value="NC_002952.2"/>
</dbReference>
<dbReference type="SMR" id="Q6GG72"/>
<dbReference type="KEGG" id="sar:SAR1711"/>
<dbReference type="HOGENOM" id="CLU_025113_1_1_9"/>
<dbReference type="Proteomes" id="UP000000596">
    <property type="component" value="Chromosome"/>
</dbReference>
<dbReference type="GO" id="GO:0005737">
    <property type="term" value="C:cytoplasm"/>
    <property type="evidence" value="ECO:0007669"/>
    <property type="project" value="UniProtKB-SubCell"/>
</dbReference>
<dbReference type="GO" id="GO:0005524">
    <property type="term" value="F:ATP binding"/>
    <property type="evidence" value="ECO:0007669"/>
    <property type="project" value="UniProtKB-UniRule"/>
</dbReference>
<dbReference type="GO" id="GO:0140096">
    <property type="term" value="F:catalytic activity, acting on a protein"/>
    <property type="evidence" value="ECO:0007669"/>
    <property type="project" value="UniProtKB-ARBA"/>
</dbReference>
<dbReference type="GO" id="GO:0004821">
    <property type="term" value="F:histidine-tRNA ligase activity"/>
    <property type="evidence" value="ECO:0007669"/>
    <property type="project" value="UniProtKB-UniRule"/>
</dbReference>
<dbReference type="GO" id="GO:0016740">
    <property type="term" value="F:transferase activity"/>
    <property type="evidence" value="ECO:0007669"/>
    <property type="project" value="UniProtKB-ARBA"/>
</dbReference>
<dbReference type="GO" id="GO:0006427">
    <property type="term" value="P:histidyl-tRNA aminoacylation"/>
    <property type="evidence" value="ECO:0007669"/>
    <property type="project" value="UniProtKB-UniRule"/>
</dbReference>
<dbReference type="CDD" id="cd00738">
    <property type="entry name" value="HGTP_anticodon"/>
    <property type="match status" value="1"/>
</dbReference>
<dbReference type="CDD" id="cd00773">
    <property type="entry name" value="HisRS-like_core"/>
    <property type="match status" value="1"/>
</dbReference>
<dbReference type="FunFam" id="3.30.930.10:FF:000005">
    <property type="entry name" value="Histidine--tRNA ligase"/>
    <property type="match status" value="1"/>
</dbReference>
<dbReference type="Gene3D" id="3.40.50.800">
    <property type="entry name" value="Anticodon-binding domain"/>
    <property type="match status" value="1"/>
</dbReference>
<dbReference type="Gene3D" id="3.30.930.10">
    <property type="entry name" value="Bira Bifunctional Protein, Domain 2"/>
    <property type="match status" value="1"/>
</dbReference>
<dbReference type="HAMAP" id="MF_00127">
    <property type="entry name" value="His_tRNA_synth"/>
    <property type="match status" value="1"/>
</dbReference>
<dbReference type="InterPro" id="IPR006195">
    <property type="entry name" value="aa-tRNA-synth_II"/>
</dbReference>
<dbReference type="InterPro" id="IPR045864">
    <property type="entry name" value="aa-tRNA-synth_II/BPL/LPL"/>
</dbReference>
<dbReference type="InterPro" id="IPR004154">
    <property type="entry name" value="Anticodon-bd"/>
</dbReference>
<dbReference type="InterPro" id="IPR036621">
    <property type="entry name" value="Anticodon-bd_dom_sf"/>
</dbReference>
<dbReference type="InterPro" id="IPR015807">
    <property type="entry name" value="His-tRNA-ligase"/>
</dbReference>
<dbReference type="InterPro" id="IPR041715">
    <property type="entry name" value="HisRS-like_core"/>
</dbReference>
<dbReference type="InterPro" id="IPR004516">
    <property type="entry name" value="HisRS/HisZ"/>
</dbReference>
<dbReference type="NCBIfam" id="TIGR00442">
    <property type="entry name" value="hisS"/>
    <property type="match status" value="1"/>
</dbReference>
<dbReference type="PANTHER" id="PTHR43707:SF1">
    <property type="entry name" value="HISTIDINE--TRNA LIGASE, MITOCHONDRIAL-RELATED"/>
    <property type="match status" value="1"/>
</dbReference>
<dbReference type="PANTHER" id="PTHR43707">
    <property type="entry name" value="HISTIDYL-TRNA SYNTHETASE"/>
    <property type="match status" value="1"/>
</dbReference>
<dbReference type="Pfam" id="PF03129">
    <property type="entry name" value="HGTP_anticodon"/>
    <property type="match status" value="1"/>
</dbReference>
<dbReference type="Pfam" id="PF13393">
    <property type="entry name" value="tRNA-synt_His"/>
    <property type="match status" value="1"/>
</dbReference>
<dbReference type="PIRSF" id="PIRSF001549">
    <property type="entry name" value="His-tRNA_synth"/>
    <property type="match status" value="1"/>
</dbReference>
<dbReference type="SUPFAM" id="SSF52954">
    <property type="entry name" value="Class II aaRS ABD-related"/>
    <property type="match status" value="1"/>
</dbReference>
<dbReference type="SUPFAM" id="SSF55681">
    <property type="entry name" value="Class II aaRS and biotin synthetases"/>
    <property type="match status" value="1"/>
</dbReference>
<dbReference type="PROSITE" id="PS50862">
    <property type="entry name" value="AA_TRNA_LIGASE_II"/>
    <property type="match status" value="1"/>
</dbReference>
<feature type="chain" id="PRO_0000136251" description="Histidine--tRNA ligase">
    <location>
        <begin position="1"/>
        <end position="420"/>
    </location>
</feature>
<comment type="catalytic activity">
    <reaction evidence="1">
        <text>tRNA(His) + L-histidine + ATP = L-histidyl-tRNA(His) + AMP + diphosphate + H(+)</text>
        <dbReference type="Rhea" id="RHEA:17313"/>
        <dbReference type="Rhea" id="RHEA-COMP:9665"/>
        <dbReference type="Rhea" id="RHEA-COMP:9689"/>
        <dbReference type="ChEBI" id="CHEBI:15378"/>
        <dbReference type="ChEBI" id="CHEBI:30616"/>
        <dbReference type="ChEBI" id="CHEBI:33019"/>
        <dbReference type="ChEBI" id="CHEBI:57595"/>
        <dbReference type="ChEBI" id="CHEBI:78442"/>
        <dbReference type="ChEBI" id="CHEBI:78527"/>
        <dbReference type="ChEBI" id="CHEBI:456215"/>
        <dbReference type="EC" id="6.1.1.21"/>
    </reaction>
</comment>
<comment type="subunit">
    <text evidence="1">Homodimer.</text>
</comment>
<comment type="subcellular location">
    <subcellularLocation>
        <location evidence="1">Cytoplasm</location>
    </subcellularLocation>
</comment>
<comment type="similarity">
    <text evidence="1">Belongs to the class-II aminoacyl-tRNA synthetase family.</text>
</comment>
<sequence length="420" mass="48283">MIKIPRGTQDILPEDSKKWRYIENQLDELMTFYNYKEIRTPIFESTDLFARGVGDSTDVVQKEMYTFKDKGDRSITLRPEGTAAVVRSYIEHKMQGNPNQPIKLYYNGPMFRYERKQKGRYRQFNQFGVEAIGAENPSVDAEVLAMVMHIYQSFGLKHLKLVINSVGDMASRKEYNEALVKHFEPVIHEFCSDCQSRLHTNPMRILDCKVDRDKEAIKTAPRITDFLNEESKAYYEQVKAYLDDLGIPYIEDPNLVRGLDYYTHTAFELMMDNPNYDGAITTLCGGGRYNGLLELLDGPSETGIGFALSIERLLLALEEEGIELDIEENLDLFIVTMGDQADRYAVKLLNHLRHNGIKADKDYLQRKIKGQMKQADRLGAKFTIVIGDQELENNKIDVKNMTTGESETIELDALVEYFKK</sequence>
<evidence type="ECO:0000255" key="1">
    <source>
        <dbReference type="HAMAP-Rule" id="MF_00127"/>
    </source>
</evidence>
<name>SYH_STAAR</name>
<organism>
    <name type="scientific">Staphylococcus aureus (strain MRSA252)</name>
    <dbReference type="NCBI Taxonomy" id="282458"/>
    <lineage>
        <taxon>Bacteria</taxon>
        <taxon>Bacillati</taxon>
        <taxon>Bacillota</taxon>
        <taxon>Bacilli</taxon>
        <taxon>Bacillales</taxon>
        <taxon>Staphylococcaceae</taxon>
        <taxon>Staphylococcus</taxon>
    </lineage>
</organism>
<gene>
    <name evidence="1" type="primary">hisS</name>
    <name type="ordered locus">SAR1711</name>
</gene>
<keyword id="KW-0030">Aminoacyl-tRNA synthetase</keyword>
<keyword id="KW-0067">ATP-binding</keyword>
<keyword id="KW-0963">Cytoplasm</keyword>
<keyword id="KW-0436">Ligase</keyword>
<keyword id="KW-0547">Nucleotide-binding</keyword>
<keyword id="KW-0648">Protein biosynthesis</keyword>
<protein>
    <recommendedName>
        <fullName evidence="1">Histidine--tRNA ligase</fullName>
        <ecNumber evidence="1">6.1.1.21</ecNumber>
    </recommendedName>
    <alternativeName>
        <fullName evidence="1">Histidyl-tRNA synthetase</fullName>
        <shortName evidence="1">HisRS</shortName>
    </alternativeName>
</protein>
<proteinExistence type="inferred from homology"/>